<organism>
    <name type="scientific">Methylobacterium nodulans (strain LMG 21967 / CNCM I-2342 / ORS 2060)</name>
    <dbReference type="NCBI Taxonomy" id="460265"/>
    <lineage>
        <taxon>Bacteria</taxon>
        <taxon>Pseudomonadati</taxon>
        <taxon>Pseudomonadota</taxon>
        <taxon>Alphaproteobacteria</taxon>
        <taxon>Hyphomicrobiales</taxon>
        <taxon>Methylobacteriaceae</taxon>
        <taxon>Methylobacterium</taxon>
    </lineage>
</organism>
<protein>
    <recommendedName>
        <fullName evidence="1">Ribosome maturation factor RimM</fullName>
    </recommendedName>
</protein>
<sequence length="204" mass="20873">MQRDPAGAPRPAGASAAAPDLAGDPAFVLLGEFGRAHGLQGEVRLKSYTADPMAIGSYGPLTGANGRAIALTALRPASGAPDMLIARVSGVSGRDAAEALNRLALYVRRECLGAPEDEDEFFSADLIGLAVVDAAGTRLGTIRAVPNYGGGDLLEIEPTGGGAAALLPFTRAFVPKVDIAAREVTIDPPDDLFAPAKPSPEDEV</sequence>
<evidence type="ECO:0000255" key="1">
    <source>
        <dbReference type="HAMAP-Rule" id="MF_00014"/>
    </source>
</evidence>
<reference key="1">
    <citation type="submission" date="2009-01" db="EMBL/GenBank/DDBJ databases">
        <title>Complete sequence of chromosome of Methylobacterium nodulans ORS 2060.</title>
        <authorList>
            <consortium name="US DOE Joint Genome Institute"/>
            <person name="Lucas S."/>
            <person name="Copeland A."/>
            <person name="Lapidus A."/>
            <person name="Glavina del Rio T."/>
            <person name="Dalin E."/>
            <person name="Tice H."/>
            <person name="Bruce D."/>
            <person name="Goodwin L."/>
            <person name="Pitluck S."/>
            <person name="Sims D."/>
            <person name="Brettin T."/>
            <person name="Detter J.C."/>
            <person name="Han C."/>
            <person name="Larimer F."/>
            <person name="Land M."/>
            <person name="Hauser L."/>
            <person name="Kyrpides N."/>
            <person name="Ivanova N."/>
            <person name="Marx C.J."/>
            <person name="Richardson P."/>
        </authorList>
    </citation>
    <scope>NUCLEOTIDE SEQUENCE [LARGE SCALE GENOMIC DNA]</scope>
    <source>
        <strain>LMG 21967 / CNCM I-2342 / ORS 2060</strain>
    </source>
</reference>
<proteinExistence type="inferred from homology"/>
<accession>B8IGW5</accession>
<feature type="chain" id="PRO_1000116574" description="Ribosome maturation factor RimM">
    <location>
        <begin position="1"/>
        <end position="204"/>
    </location>
</feature>
<feature type="domain" description="PRC barrel" evidence="1">
    <location>
        <begin position="117"/>
        <end position="192"/>
    </location>
</feature>
<comment type="function">
    <text evidence="1">An accessory protein needed during the final step in the assembly of 30S ribosomal subunit, possibly for assembly of the head region. Essential for efficient processing of 16S rRNA. May be needed both before and after RbfA during the maturation of 16S rRNA. It has affinity for free ribosomal 30S subunits but not for 70S ribosomes.</text>
</comment>
<comment type="subunit">
    <text evidence="1">Binds ribosomal protein uS19.</text>
</comment>
<comment type="subcellular location">
    <subcellularLocation>
        <location evidence="1">Cytoplasm</location>
    </subcellularLocation>
</comment>
<comment type="domain">
    <text evidence="1">The PRC barrel domain binds ribosomal protein uS19.</text>
</comment>
<comment type="similarity">
    <text evidence="1">Belongs to the RimM family.</text>
</comment>
<keyword id="KW-0143">Chaperone</keyword>
<keyword id="KW-0963">Cytoplasm</keyword>
<keyword id="KW-1185">Reference proteome</keyword>
<keyword id="KW-0690">Ribosome biogenesis</keyword>
<keyword id="KW-0698">rRNA processing</keyword>
<name>RIMM_METNO</name>
<gene>
    <name evidence="1" type="primary">rimM</name>
    <name type="ordered locus">Mnod_2889</name>
</gene>
<dbReference type="EMBL" id="CP001349">
    <property type="protein sequence ID" value="ACL57840.1"/>
    <property type="molecule type" value="Genomic_DNA"/>
</dbReference>
<dbReference type="SMR" id="B8IGW5"/>
<dbReference type="STRING" id="460265.Mnod_2889"/>
<dbReference type="KEGG" id="mno:Mnod_2889"/>
<dbReference type="eggNOG" id="COG0806">
    <property type="taxonomic scope" value="Bacteria"/>
</dbReference>
<dbReference type="HOGENOM" id="CLU_077636_0_1_5"/>
<dbReference type="Proteomes" id="UP000008207">
    <property type="component" value="Chromosome"/>
</dbReference>
<dbReference type="GO" id="GO:0005737">
    <property type="term" value="C:cytoplasm"/>
    <property type="evidence" value="ECO:0007669"/>
    <property type="project" value="UniProtKB-SubCell"/>
</dbReference>
<dbReference type="GO" id="GO:0005840">
    <property type="term" value="C:ribosome"/>
    <property type="evidence" value="ECO:0007669"/>
    <property type="project" value="InterPro"/>
</dbReference>
<dbReference type="GO" id="GO:0043022">
    <property type="term" value="F:ribosome binding"/>
    <property type="evidence" value="ECO:0007669"/>
    <property type="project" value="InterPro"/>
</dbReference>
<dbReference type="GO" id="GO:0042274">
    <property type="term" value="P:ribosomal small subunit biogenesis"/>
    <property type="evidence" value="ECO:0007669"/>
    <property type="project" value="UniProtKB-UniRule"/>
</dbReference>
<dbReference type="GO" id="GO:0006364">
    <property type="term" value="P:rRNA processing"/>
    <property type="evidence" value="ECO:0007669"/>
    <property type="project" value="UniProtKB-UniRule"/>
</dbReference>
<dbReference type="Gene3D" id="2.30.30.240">
    <property type="entry name" value="PRC-barrel domain"/>
    <property type="match status" value="1"/>
</dbReference>
<dbReference type="Gene3D" id="2.40.30.60">
    <property type="entry name" value="RimM"/>
    <property type="match status" value="1"/>
</dbReference>
<dbReference type="HAMAP" id="MF_00014">
    <property type="entry name" value="Ribosome_mat_RimM"/>
    <property type="match status" value="1"/>
</dbReference>
<dbReference type="InterPro" id="IPR011033">
    <property type="entry name" value="PRC_barrel-like_sf"/>
</dbReference>
<dbReference type="InterPro" id="IPR056792">
    <property type="entry name" value="PRC_RimM"/>
</dbReference>
<dbReference type="InterPro" id="IPR011961">
    <property type="entry name" value="RimM"/>
</dbReference>
<dbReference type="InterPro" id="IPR002676">
    <property type="entry name" value="RimM_N"/>
</dbReference>
<dbReference type="InterPro" id="IPR036976">
    <property type="entry name" value="RimM_N_sf"/>
</dbReference>
<dbReference type="InterPro" id="IPR009000">
    <property type="entry name" value="Transl_B-barrel_sf"/>
</dbReference>
<dbReference type="NCBIfam" id="TIGR02273">
    <property type="entry name" value="16S_RimM"/>
    <property type="match status" value="1"/>
</dbReference>
<dbReference type="PANTHER" id="PTHR33692">
    <property type="entry name" value="RIBOSOME MATURATION FACTOR RIMM"/>
    <property type="match status" value="1"/>
</dbReference>
<dbReference type="PANTHER" id="PTHR33692:SF1">
    <property type="entry name" value="RIBOSOME MATURATION FACTOR RIMM"/>
    <property type="match status" value="1"/>
</dbReference>
<dbReference type="Pfam" id="PF24986">
    <property type="entry name" value="PRC_RimM"/>
    <property type="match status" value="1"/>
</dbReference>
<dbReference type="Pfam" id="PF01782">
    <property type="entry name" value="RimM"/>
    <property type="match status" value="1"/>
</dbReference>
<dbReference type="SUPFAM" id="SSF50346">
    <property type="entry name" value="PRC-barrel domain"/>
    <property type="match status" value="1"/>
</dbReference>
<dbReference type="SUPFAM" id="SSF50447">
    <property type="entry name" value="Translation proteins"/>
    <property type="match status" value="1"/>
</dbReference>